<organism>
    <name type="scientific">Shewanella loihica (strain ATCC BAA-1088 / PV-4)</name>
    <dbReference type="NCBI Taxonomy" id="323850"/>
    <lineage>
        <taxon>Bacteria</taxon>
        <taxon>Pseudomonadati</taxon>
        <taxon>Pseudomonadota</taxon>
        <taxon>Gammaproteobacteria</taxon>
        <taxon>Alteromonadales</taxon>
        <taxon>Shewanellaceae</taxon>
        <taxon>Shewanella</taxon>
    </lineage>
</organism>
<comment type="function">
    <text evidence="1">Cell wall formation. Catalyzes the transfer of a GlcNAc subunit on undecaprenyl-pyrophosphoryl-MurNAc-pentapeptide (lipid intermediate I) to form undecaprenyl-pyrophosphoryl-MurNAc-(pentapeptide)GlcNAc (lipid intermediate II).</text>
</comment>
<comment type="catalytic activity">
    <reaction evidence="1">
        <text>di-trans,octa-cis-undecaprenyl diphospho-N-acetyl-alpha-D-muramoyl-L-alanyl-D-glutamyl-meso-2,6-diaminopimeloyl-D-alanyl-D-alanine + UDP-N-acetyl-alpha-D-glucosamine = di-trans,octa-cis-undecaprenyl diphospho-[N-acetyl-alpha-D-glucosaminyl-(1-&gt;4)]-N-acetyl-alpha-D-muramoyl-L-alanyl-D-glutamyl-meso-2,6-diaminopimeloyl-D-alanyl-D-alanine + UDP + H(+)</text>
        <dbReference type="Rhea" id="RHEA:31227"/>
        <dbReference type="ChEBI" id="CHEBI:15378"/>
        <dbReference type="ChEBI" id="CHEBI:57705"/>
        <dbReference type="ChEBI" id="CHEBI:58223"/>
        <dbReference type="ChEBI" id="CHEBI:61387"/>
        <dbReference type="ChEBI" id="CHEBI:61388"/>
        <dbReference type="EC" id="2.4.1.227"/>
    </reaction>
</comment>
<comment type="pathway">
    <text evidence="1">Cell wall biogenesis; peptidoglycan biosynthesis.</text>
</comment>
<comment type="subcellular location">
    <subcellularLocation>
        <location evidence="1">Cell inner membrane</location>
        <topology evidence="1">Peripheral membrane protein</topology>
        <orientation evidence="1">Cytoplasmic side</orientation>
    </subcellularLocation>
</comment>
<comment type="similarity">
    <text evidence="1">Belongs to the glycosyltransferase 28 family. MurG subfamily.</text>
</comment>
<evidence type="ECO:0000255" key="1">
    <source>
        <dbReference type="HAMAP-Rule" id="MF_00033"/>
    </source>
</evidence>
<dbReference type="EC" id="2.4.1.227" evidence="1"/>
<dbReference type="EMBL" id="CP000606">
    <property type="protein sequence ID" value="ABO25319.1"/>
    <property type="molecule type" value="Genomic_DNA"/>
</dbReference>
<dbReference type="RefSeq" id="WP_011867249.1">
    <property type="nucleotide sequence ID" value="NC_009092.1"/>
</dbReference>
<dbReference type="SMR" id="A3QIM1"/>
<dbReference type="STRING" id="323850.Shew_3453"/>
<dbReference type="CAZy" id="GT28">
    <property type="family name" value="Glycosyltransferase Family 28"/>
</dbReference>
<dbReference type="KEGG" id="slo:Shew_3453"/>
<dbReference type="eggNOG" id="COG0707">
    <property type="taxonomic scope" value="Bacteria"/>
</dbReference>
<dbReference type="HOGENOM" id="CLU_037404_2_0_6"/>
<dbReference type="OrthoDB" id="9808936at2"/>
<dbReference type="UniPathway" id="UPA00219"/>
<dbReference type="Proteomes" id="UP000001558">
    <property type="component" value="Chromosome"/>
</dbReference>
<dbReference type="GO" id="GO:0005886">
    <property type="term" value="C:plasma membrane"/>
    <property type="evidence" value="ECO:0007669"/>
    <property type="project" value="UniProtKB-SubCell"/>
</dbReference>
<dbReference type="GO" id="GO:0051991">
    <property type="term" value="F:UDP-N-acetyl-D-glucosamine:N-acetylmuramoyl-L-alanyl-D-glutamyl-meso-2,6-diaminopimelyl-D-alanyl-D-alanine-diphosphoundecaprenol 4-beta-N-acetylglucosaminlytransferase activity"/>
    <property type="evidence" value="ECO:0007669"/>
    <property type="project" value="RHEA"/>
</dbReference>
<dbReference type="GO" id="GO:0050511">
    <property type="term" value="F:undecaprenyldiphospho-muramoylpentapeptide beta-N-acetylglucosaminyltransferase activity"/>
    <property type="evidence" value="ECO:0007669"/>
    <property type="project" value="UniProtKB-UniRule"/>
</dbReference>
<dbReference type="GO" id="GO:0005975">
    <property type="term" value="P:carbohydrate metabolic process"/>
    <property type="evidence" value="ECO:0007669"/>
    <property type="project" value="InterPro"/>
</dbReference>
<dbReference type="GO" id="GO:0051301">
    <property type="term" value="P:cell division"/>
    <property type="evidence" value="ECO:0007669"/>
    <property type="project" value="UniProtKB-KW"/>
</dbReference>
<dbReference type="GO" id="GO:0071555">
    <property type="term" value="P:cell wall organization"/>
    <property type="evidence" value="ECO:0007669"/>
    <property type="project" value="UniProtKB-KW"/>
</dbReference>
<dbReference type="GO" id="GO:0030259">
    <property type="term" value="P:lipid glycosylation"/>
    <property type="evidence" value="ECO:0007669"/>
    <property type="project" value="UniProtKB-UniRule"/>
</dbReference>
<dbReference type="GO" id="GO:0009252">
    <property type="term" value="P:peptidoglycan biosynthetic process"/>
    <property type="evidence" value="ECO:0007669"/>
    <property type="project" value="UniProtKB-UniRule"/>
</dbReference>
<dbReference type="GO" id="GO:0008360">
    <property type="term" value="P:regulation of cell shape"/>
    <property type="evidence" value="ECO:0007669"/>
    <property type="project" value="UniProtKB-KW"/>
</dbReference>
<dbReference type="CDD" id="cd03785">
    <property type="entry name" value="GT28_MurG"/>
    <property type="match status" value="1"/>
</dbReference>
<dbReference type="Gene3D" id="3.40.50.2000">
    <property type="entry name" value="Glycogen Phosphorylase B"/>
    <property type="match status" value="2"/>
</dbReference>
<dbReference type="HAMAP" id="MF_00033">
    <property type="entry name" value="MurG"/>
    <property type="match status" value="1"/>
</dbReference>
<dbReference type="InterPro" id="IPR006009">
    <property type="entry name" value="GlcNAc_MurG"/>
</dbReference>
<dbReference type="InterPro" id="IPR007235">
    <property type="entry name" value="Glyco_trans_28_C"/>
</dbReference>
<dbReference type="InterPro" id="IPR004276">
    <property type="entry name" value="GlycoTrans_28_N"/>
</dbReference>
<dbReference type="NCBIfam" id="TIGR01133">
    <property type="entry name" value="murG"/>
    <property type="match status" value="1"/>
</dbReference>
<dbReference type="PANTHER" id="PTHR21015:SF22">
    <property type="entry name" value="GLYCOSYLTRANSFERASE"/>
    <property type="match status" value="1"/>
</dbReference>
<dbReference type="PANTHER" id="PTHR21015">
    <property type="entry name" value="UDP-N-ACETYLGLUCOSAMINE--N-ACETYLMURAMYL-(PENTAPEPTIDE) PYROPHOSPHORYL-UNDECAPRENOL N-ACETYLGLUCOSAMINE TRANSFERASE 1"/>
    <property type="match status" value="1"/>
</dbReference>
<dbReference type="Pfam" id="PF04101">
    <property type="entry name" value="Glyco_tran_28_C"/>
    <property type="match status" value="1"/>
</dbReference>
<dbReference type="Pfam" id="PF03033">
    <property type="entry name" value="Glyco_transf_28"/>
    <property type="match status" value="1"/>
</dbReference>
<dbReference type="SUPFAM" id="SSF53756">
    <property type="entry name" value="UDP-Glycosyltransferase/glycogen phosphorylase"/>
    <property type="match status" value="1"/>
</dbReference>
<sequence>MASEKRILIMAGGTGGHVFPALAVAKALAKQGWQVRWLGTADRMEARLVPQHGFDIDFIDIKGVRGNGLIRKLAAPFKILRSIMQAREVIKEFKPHVVLGMGGFASGPGGVAAKLSGIPLVLHEQNAIPGMTNKLLSRIASRVLCAFENTFEGNAEVVGNPIRSELIALGRSEQPIVPDDALRVLVVGGSLGAKIFNDLMPSVTAAVAQHHSMTVWHQVGKGNQAQVEAEYLQLGQSGSVKVAEFIDDMEAAYRWADVILCRAGALTVSEVAAVGLPSLLVPYPHAVDDHQTKNAQVLVEAGGAFLLPQTVLDSEKLISKLQILASDRKALIEMGQLAKSVAVLDATERVAAVCIALASKEKDD</sequence>
<protein>
    <recommendedName>
        <fullName evidence="1">UDP-N-acetylglucosamine--N-acetylmuramyl-(pentapeptide) pyrophosphoryl-undecaprenol N-acetylglucosamine transferase</fullName>
        <ecNumber evidence="1">2.4.1.227</ecNumber>
    </recommendedName>
    <alternativeName>
        <fullName evidence="1">Undecaprenyl-PP-MurNAc-pentapeptide-UDPGlcNAc GlcNAc transferase</fullName>
    </alternativeName>
</protein>
<proteinExistence type="inferred from homology"/>
<keyword id="KW-0131">Cell cycle</keyword>
<keyword id="KW-0132">Cell division</keyword>
<keyword id="KW-0997">Cell inner membrane</keyword>
<keyword id="KW-1003">Cell membrane</keyword>
<keyword id="KW-0133">Cell shape</keyword>
<keyword id="KW-0961">Cell wall biogenesis/degradation</keyword>
<keyword id="KW-0328">Glycosyltransferase</keyword>
<keyword id="KW-0472">Membrane</keyword>
<keyword id="KW-0573">Peptidoglycan synthesis</keyword>
<keyword id="KW-1185">Reference proteome</keyword>
<keyword id="KW-0808">Transferase</keyword>
<feature type="chain" id="PRO_0000315167" description="UDP-N-acetylglucosamine--N-acetylmuramyl-(pentapeptide) pyrophosphoryl-undecaprenol N-acetylglucosamine transferase">
    <location>
        <begin position="1"/>
        <end position="364"/>
    </location>
</feature>
<feature type="binding site" evidence="1">
    <location>
        <begin position="14"/>
        <end position="16"/>
    </location>
    <ligand>
        <name>UDP-N-acetyl-alpha-D-glucosamine</name>
        <dbReference type="ChEBI" id="CHEBI:57705"/>
    </ligand>
</feature>
<feature type="binding site" evidence="1">
    <location>
        <position position="126"/>
    </location>
    <ligand>
        <name>UDP-N-acetyl-alpha-D-glucosamine</name>
        <dbReference type="ChEBI" id="CHEBI:57705"/>
    </ligand>
</feature>
<feature type="binding site" evidence="1">
    <location>
        <position position="163"/>
    </location>
    <ligand>
        <name>UDP-N-acetyl-alpha-D-glucosamine</name>
        <dbReference type="ChEBI" id="CHEBI:57705"/>
    </ligand>
</feature>
<feature type="binding site" evidence="1">
    <location>
        <position position="190"/>
    </location>
    <ligand>
        <name>UDP-N-acetyl-alpha-D-glucosamine</name>
        <dbReference type="ChEBI" id="CHEBI:57705"/>
    </ligand>
</feature>
<feature type="binding site" evidence="1">
    <location>
        <position position="246"/>
    </location>
    <ligand>
        <name>UDP-N-acetyl-alpha-D-glucosamine</name>
        <dbReference type="ChEBI" id="CHEBI:57705"/>
    </ligand>
</feature>
<feature type="binding site" evidence="1">
    <location>
        <begin position="265"/>
        <end position="270"/>
    </location>
    <ligand>
        <name>UDP-N-acetyl-alpha-D-glucosamine</name>
        <dbReference type="ChEBI" id="CHEBI:57705"/>
    </ligand>
</feature>
<feature type="binding site" evidence="1">
    <location>
        <position position="291"/>
    </location>
    <ligand>
        <name>UDP-N-acetyl-alpha-D-glucosamine</name>
        <dbReference type="ChEBI" id="CHEBI:57705"/>
    </ligand>
</feature>
<name>MURG_SHELP</name>
<reference key="1">
    <citation type="submission" date="2007-03" db="EMBL/GenBank/DDBJ databases">
        <title>Complete sequence of Shewanella loihica PV-4.</title>
        <authorList>
            <consortium name="US DOE Joint Genome Institute"/>
            <person name="Copeland A."/>
            <person name="Lucas S."/>
            <person name="Lapidus A."/>
            <person name="Barry K."/>
            <person name="Detter J.C."/>
            <person name="Glavina del Rio T."/>
            <person name="Hammon N."/>
            <person name="Israni S."/>
            <person name="Dalin E."/>
            <person name="Tice H."/>
            <person name="Pitluck S."/>
            <person name="Chain P."/>
            <person name="Malfatti S."/>
            <person name="Shin M."/>
            <person name="Vergez L."/>
            <person name="Schmutz J."/>
            <person name="Larimer F."/>
            <person name="Land M."/>
            <person name="Hauser L."/>
            <person name="Kyrpides N."/>
            <person name="Mikhailova N."/>
            <person name="Romine M.F."/>
            <person name="Serres G."/>
            <person name="Fredrickson J."/>
            <person name="Tiedje J."/>
            <person name="Richardson P."/>
        </authorList>
    </citation>
    <scope>NUCLEOTIDE SEQUENCE [LARGE SCALE GENOMIC DNA]</scope>
    <source>
        <strain>ATCC BAA-1088 / PV-4</strain>
    </source>
</reference>
<accession>A3QIM1</accession>
<gene>
    <name evidence="1" type="primary">murG</name>
    <name type="ordered locus">Shew_3453</name>
</gene>